<gene>
    <name evidence="1" type="primary">murQ</name>
    <name type="ordered locus">LACR_1241</name>
</gene>
<keyword id="KW-0119">Carbohydrate metabolism</keyword>
<keyword id="KW-0456">Lyase</keyword>
<evidence type="ECO:0000255" key="1">
    <source>
        <dbReference type="HAMAP-Rule" id="MF_00068"/>
    </source>
</evidence>
<organism>
    <name type="scientific">Lactococcus lactis subsp. cremoris (strain SK11)</name>
    <dbReference type="NCBI Taxonomy" id="272622"/>
    <lineage>
        <taxon>Bacteria</taxon>
        <taxon>Bacillati</taxon>
        <taxon>Bacillota</taxon>
        <taxon>Bacilli</taxon>
        <taxon>Lactobacillales</taxon>
        <taxon>Streptococcaceae</taxon>
        <taxon>Lactococcus</taxon>
        <taxon>Lactococcus cremoris subsp. cremoris</taxon>
    </lineage>
</organism>
<dbReference type="EC" id="4.2.1.126" evidence="1"/>
<dbReference type="EMBL" id="CP000425">
    <property type="protein sequence ID" value="ABJ72771.1"/>
    <property type="molecule type" value="Genomic_DNA"/>
</dbReference>
<dbReference type="RefSeq" id="WP_011676243.1">
    <property type="nucleotide sequence ID" value="NC_008527.1"/>
</dbReference>
<dbReference type="SMR" id="Q02Z51"/>
<dbReference type="KEGG" id="llc:LACR_1241"/>
<dbReference type="HOGENOM" id="CLU_049049_1_1_9"/>
<dbReference type="UniPathway" id="UPA00342"/>
<dbReference type="Proteomes" id="UP000000240">
    <property type="component" value="Chromosome"/>
</dbReference>
<dbReference type="GO" id="GO:0097367">
    <property type="term" value="F:carbohydrate derivative binding"/>
    <property type="evidence" value="ECO:0007669"/>
    <property type="project" value="InterPro"/>
</dbReference>
<dbReference type="GO" id="GO:0016835">
    <property type="term" value="F:carbon-oxygen lyase activity"/>
    <property type="evidence" value="ECO:0007669"/>
    <property type="project" value="UniProtKB-UniRule"/>
</dbReference>
<dbReference type="GO" id="GO:0016803">
    <property type="term" value="F:ether hydrolase activity"/>
    <property type="evidence" value="ECO:0007669"/>
    <property type="project" value="TreeGrafter"/>
</dbReference>
<dbReference type="GO" id="GO:0046348">
    <property type="term" value="P:amino sugar catabolic process"/>
    <property type="evidence" value="ECO:0007669"/>
    <property type="project" value="InterPro"/>
</dbReference>
<dbReference type="GO" id="GO:0097173">
    <property type="term" value="P:N-acetylmuramic acid catabolic process"/>
    <property type="evidence" value="ECO:0007669"/>
    <property type="project" value="UniProtKB-UniPathway"/>
</dbReference>
<dbReference type="GO" id="GO:0009254">
    <property type="term" value="P:peptidoglycan turnover"/>
    <property type="evidence" value="ECO:0007669"/>
    <property type="project" value="TreeGrafter"/>
</dbReference>
<dbReference type="CDD" id="cd05007">
    <property type="entry name" value="SIS_Etherase"/>
    <property type="match status" value="1"/>
</dbReference>
<dbReference type="FunFam" id="1.10.8.1080:FF:000001">
    <property type="entry name" value="N-acetylmuramic acid 6-phosphate etherase"/>
    <property type="match status" value="1"/>
</dbReference>
<dbReference type="FunFam" id="3.40.50.10490:FF:000014">
    <property type="entry name" value="N-acetylmuramic acid 6-phosphate etherase"/>
    <property type="match status" value="1"/>
</dbReference>
<dbReference type="Gene3D" id="1.10.8.1080">
    <property type="match status" value="1"/>
</dbReference>
<dbReference type="Gene3D" id="3.40.50.10490">
    <property type="entry name" value="Glucose-6-phosphate isomerase like protein, domain 1"/>
    <property type="match status" value="1"/>
</dbReference>
<dbReference type="HAMAP" id="MF_00068">
    <property type="entry name" value="MurQ"/>
    <property type="match status" value="1"/>
</dbReference>
<dbReference type="InterPro" id="IPR005488">
    <property type="entry name" value="Etherase_MurQ"/>
</dbReference>
<dbReference type="InterPro" id="IPR005486">
    <property type="entry name" value="Glucokinase_regulatory_CS"/>
</dbReference>
<dbReference type="InterPro" id="IPR040190">
    <property type="entry name" value="MURQ/GCKR"/>
</dbReference>
<dbReference type="InterPro" id="IPR001347">
    <property type="entry name" value="SIS_dom"/>
</dbReference>
<dbReference type="InterPro" id="IPR046348">
    <property type="entry name" value="SIS_dom_sf"/>
</dbReference>
<dbReference type="NCBIfam" id="TIGR00274">
    <property type="entry name" value="N-acetylmuramic acid 6-phosphate etherase"/>
    <property type="match status" value="1"/>
</dbReference>
<dbReference type="NCBIfam" id="NF003915">
    <property type="entry name" value="PRK05441.1"/>
    <property type="match status" value="1"/>
</dbReference>
<dbReference type="NCBIfam" id="NF009222">
    <property type="entry name" value="PRK12570.1"/>
    <property type="match status" value="1"/>
</dbReference>
<dbReference type="PANTHER" id="PTHR10088">
    <property type="entry name" value="GLUCOKINASE REGULATORY PROTEIN"/>
    <property type="match status" value="1"/>
</dbReference>
<dbReference type="PANTHER" id="PTHR10088:SF4">
    <property type="entry name" value="GLUCOKINASE REGULATORY PROTEIN"/>
    <property type="match status" value="1"/>
</dbReference>
<dbReference type="Pfam" id="PF22645">
    <property type="entry name" value="GKRP_SIS_N"/>
    <property type="match status" value="1"/>
</dbReference>
<dbReference type="SUPFAM" id="SSF53697">
    <property type="entry name" value="SIS domain"/>
    <property type="match status" value="1"/>
</dbReference>
<dbReference type="PROSITE" id="PS01272">
    <property type="entry name" value="GCKR"/>
    <property type="match status" value="1"/>
</dbReference>
<dbReference type="PROSITE" id="PS51464">
    <property type="entry name" value="SIS"/>
    <property type="match status" value="1"/>
</dbReference>
<feature type="chain" id="PRO_1000009123" description="N-acetylmuramic acid 6-phosphate etherase">
    <location>
        <begin position="1"/>
        <end position="297"/>
    </location>
</feature>
<feature type="domain" description="SIS" evidence="1">
    <location>
        <begin position="56"/>
        <end position="219"/>
    </location>
</feature>
<feature type="active site" description="Proton donor" evidence="1">
    <location>
        <position position="84"/>
    </location>
</feature>
<feature type="active site" evidence="1">
    <location>
        <position position="115"/>
    </location>
</feature>
<proteinExistence type="inferred from homology"/>
<protein>
    <recommendedName>
        <fullName evidence="1">N-acetylmuramic acid 6-phosphate etherase</fullName>
        <shortName evidence="1">MurNAc-6-P etherase</shortName>
        <ecNumber evidence="1">4.2.1.126</ecNumber>
    </recommendedName>
    <alternativeName>
        <fullName evidence="1">N-acetylmuramic acid 6-phosphate hydrolase</fullName>
    </alternativeName>
    <alternativeName>
        <fullName evidence="1">N-acetylmuramic acid 6-phosphate lyase</fullName>
    </alternativeName>
</protein>
<sequence length="297" mass="32026">MIDLSTLTTERRNDETFNLDQMTVKEALVKMNNEDKKVAYAVEEVLPNIEPVISSAIEAFNKGGRLIYMGAGTSGRLGVLDAAECVPTFGVPATQVVGLIAGGDKAMTVAVEGAEDSLELGRQDLIDLNLSENDLVLGIAASGRTPYVIGALDYAKEIGAKRASLSCNLNAEISKHAEFPIEVDCGPEFLTGSTRLKSGTAQKLILNMISTISMIGIGKVYNNLMVDVKPTNEKLVERSKRIIMQATDCTYEEAEEKFNEANQDVKLAIVMLLTDCAAEEGKTKLVKANGFVKNTLN</sequence>
<reference key="1">
    <citation type="journal article" date="2006" name="Proc. Natl. Acad. Sci. U.S.A.">
        <title>Comparative genomics of the lactic acid bacteria.</title>
        <authorList>
            <person name="Makarova K.S."/>
            <person name="Slesarev A."/>
            <person name="Wolf Y.I."/>
            <person name="Sorokin A."/>
            <person name="Mirkin B."/>
            <person name="Koonin E.V."/>
            <person name="Pavlov A."/>
            <person name="Pavlova N."/>
            <person name="Karamychev V."/>
            <person name="Polouchine N."/>
            <person name="Shakhova V."/>
            <person name="Grigoriev I."/>
            <person name="Lou Y."/>
            <person name="Rohksar D."/>
            <person name="Lucas S."/>
            <person name="Huang K."/>
            <person name="Goodstein D.M."/>
            <person name="Hawkins T."/>
            <person name="Plengvidhya V."/>
            <person name="Welker D."/>
            <person name="Hughes J."/>
            <person name="Goh Y."/>
            <person name="Benson A."/>
            <person name="Baldwin K."/>
            <person name="Lee J.-H."/>
            <person name="Diaz-Muniz I."/>
            <person name="Dosti B."/>
            <person name="Smeianov V."/>
            <person name="Wechter W."/>
            <person name="Barabote R."/>
            <person name="Lorca G."/>
            <person name="Altermann E."/>
            <person name="Barrangou R."/>
            <person name="Ganesan B."/>
            <person name="Xie Y."/>
            <person name="Rawsthorne H."/>
            <person name="Tamir D."/>
            <person name="Parker C."/>
            <person name="Breidt F."/>
            <person name="Broadbent J.R."/>
            <person name="Hutkins R."/>
            <person name="O'Sullivan D."/>
            <person name="Steele J."/>
            <person name="Unlu G."/>
            <person name="Saier M.H. Jr."/>
            <person name="Klaenhammer T."/>
            <person name="Richardson P."/>
            <person name="Kozyavkin S."/>
            <person name="Weimer B.C."/>
            <person name="Mills D.A."/>
        </authorList>
    </citation>
    <scope>NUCLEOTIDE SEQUENCE [LARGE SCALE GENOMIC DNA]</scope>
    <source>
        <strain>SK11</strain>
    </source>
</reference>
<name>MURQ_LACLS</name>
<accession>Q02Z51</accession>
<comment type="function">
    <text evidence="1">Specifically catalyzes the cleavage of the D-lactyl ether substituent of MurNAc 6-phosphate, producing GlcNAc 6-phosphate and D-lactate.</text>
</comment>
<comment type="catalytic activity">
    <reaction evidence="1">
        <text>N-acetyl-D-muramate 6-phosphate + H2O = N-acetyl-D-glucosamine 6-phosphate + (R)-lactate</text>
        <dbReference type="Rhea" id="RHEA:26410"/>
        <dbReference type="ChEBI" id="CHEBI:15377"/>
        <dbReference type="ChEBI" id="CHEBI:16004"/>
        <dbReference type="ChEBI" id="CHEBI:57513"/>
        <dbReference type="ChEBI" id="CHEBI:58722"/>
        <dbReference type="EC" id="4.2.1.126"/>
    </reaction>
</comment>
<comment type="pathway">
    <text evidence="1">Amino-sugar metabolism; N-acetylmuramate degradation.</text>
</comment>
<comment type="subunit">
    <text evidence="1">Homodimer.</text>
</comment>
<comment type="miscellaneous">
    <text evidence="1">A lyase-type mechanism (elimination/hydration) is suggested for the cleavage of the lactyl ether bond of MurNAc 6-phosphate, with the formation of an alpha,beta-unsaturated aldehyde intermediate with (E)-stereochemistry, followed by the syn addition of water to give product.</text>
</comment>
<comment type="similarity">
    <text evidence="1">Belongs to the GCKR-like family. MurNAc-6-P etherase subfamily.</text>
</comment>